<organism>
    <name type="scientific">Notechis scutatus scutatus</name>
    <name type="common">Mainland tiger snake</name>
    <name type="synonym">Common tiger snake</name>
    <dbReference type="NCBI Taxonomy" id="70142"/>
    <lineage>
        <taxon>Eukaryota</taxon>
        <taxon>Metazoa</taxon>
        <taxon>Chordata</taxon>
        <taxon>Craniata</taxon>
        <taxon>Vertebrata</taxon>
        <taxon>Euteleostomi</taxon>
        <taxon>Lepidosauria</taxon>
        <taxon>Squamata</taxon>
        <taxon>Bifurcata</taxon>
        <taxon>Unidentata</taxon>
        <taxon>Episquamata</taxon>
        <taxon>Toxicofera</taxon>
        <taxon>Serpentes</taxon>
        <taxon>Colubroidea</taxon>
        <taxon>Elapidae</taxon>
        <taxon>Hydrophiinae</taxon>
        <taxon>Notechis</taxon>
    </lineage>
</organism>
<sequence length="145" mass="16002">MYPAHLLVLLAVCVSLLGAASIPPLPLNVAQFDNMIECANYGSRPSWHYMEYGCYCGKEGSGTPVDELDRCCKAHDDCYTEAEKRRCHPKFSAYSWKCGSDGPTCDPETGCKRTVCDCDATAAKCFAKAPFNQANWNIDTETHCQ</sequence>
<feature type="signal peptide" evidence="2">
    <location>
        <begin position="1"/>
        <end position="21"/>
    </location>
</feature>
<feature type="propeptide" id="PRO_0000022940" evidence="2">
    <location>
        <begin position="22"/>
        <end position="27"/>
    </location>
</feature>
<feature type="chain" id="PRO_0000022941" description="Acidic phospholipase A2">
    <location>
        <begin position="28"/>
        <end position="145"/>
    </location>
</feature>
<feature type="active site" evidence="1">
    <location>
        <position position="75"/>
    </location>
</feature>
<feature type="active site" evidence="1">
    <location>
        <position position="119"/>
    </location>
</feature>
<feature type="binding site" evidence="1">
    <location>
        <position position="55"/>
    </location>
    <ligand>
        <name>Ca(2+)</name>
        <dbReference type="ChEBI" id="CHEBI:29108"/>
    </ligand>
</feature>
<feature type="binding site" evidence="1">
    <location>
        <position position="57"/>
    </location>
    <ligand>
        <name>Ca(2+)</name>
        <dbReference type="ChEBI" id="CHEBI:29108"/>
    </ligand>
</feature>
<feature type="binding site" evidence="1">
    <location>
        <position position="76"/>
    </location>
    <ligand>
        <name>Ca(2+)</name>
        <dbReference type="ChEBI" id="CHEBI:29108"/>
    </ligand>
</feature>
<feature type="disulfide bond" evidence="1">
    <location>
        <begin position="38"/>
        <end position="98"/>
    </location>
</feature>
<feature type="disulfide bond" evidence="1">
    <location>
        <begin position="54"/>
        <end position="144"/>
    </location>
</feature>
<feature type="disulfide bond" evidence="1">
    <location>
        <begin position="56"/>
        <end position="72"/>
    </location>
</feature>
<feature type="disulfide bond" evidence="1">
    <location>
        <begin position="71"/>
        <end position="125"/>
    </location>
</feature>
<feature type="disulfide bond" evidence="1">
    <location>
        <begin position="78"/>
        <end position="118"/>
    </location>
</feature>
<feature type="disulfide bond" evidence="1">
    <location>
        <begin position="87"/>
        <end position="111"/>
    </location>
</feature>
<feature type="disulfide bond" evidence="1">
    <location>
        <begin position="105"/>
        <end position="116"/>
    </location>
</feature>
<accession>P20146</accession>
<evidence type="ECO:0000250" key="1"/>
<evidence type="ECO:0000255" key="2"/>
<evidence type="ECO:0000255" key="3">
    <source>
        <dbReference type="PROSITE-ProRule" id="PRU10035"/>
    </source>
</evidence>
<evidence type="ECO:0000255" key="4">
    <source>
        <dbReference type="PROSITE-ProRule" id="PRU10036"/>
    </source>
</evidence>
<evidence type="ECO:0000305" key="5"/>
<protein>
    <recommendedName>
        <fullName>Acidic phospholipase A2</fullName>
        <shortName>svPLA2</shortName>
        <ecNumber>3.1.1.4</ecNumber>
    </recommendedName>
    <alternativeName>
        <fullName>Phosphatidylcholine 2-acylhydrolase</fullName>
    </alternativeName>
</protein>
<comment type="function">
    <text>PLA2 catalyzes the calcium-dependent hydrolysis of the 2-acyl groups in 3-sn-phosphoglycerides.</text>
</comment>
<comment type="catalytic activity">
    <reaction evidence="3 4">
        <text>a 1,2-diacyl-sn-glycero-3-phosphocholine + H2O = a 1-acyl-sn-glycero-3-phosphocholine + a fatty acid + H(+)</text>
        <dbReference type="Rhea" id="RHEA:15801"/>
        <dbReference type="ChEBI" id="CHEBI:15377"/>
        <dbReference type="ChEBI" id="CHEBI:15378"/>
        <dbReference type="ChEBI" id="CHEBI:28868"/>
        <dbReference type="ChEBI" id="CHEBI:57643"/>
        <dbReference type="ChEBI" id="CHEBI:58168"/>
        <dbReference type="EC" id="3.1.1.4"/>
    </reaction>
</comment>
<comment type="cofactor">
    <cofactor evidence="1">
        <name>Ca(2+)</name>
        <dbReference type="ChEBI" id="CHEBI:29108"/>
    </cofactor>
    <text evidence="1">Binds 1 Ca(2+) ion.</text>
</comment>
<comment type="subcellular location">
    <subcellularLocation>
        <location>Secreted</location>
    </subcellularLocation>
</comment>
<comment type="tissue specificity">
    <text>Expressed by the venom gland.</text>
</comment>
<comment type="similarity">
    <text evidence="5">Belongs to the phospholipase A2 family. Group I subfamily. D49 sub-subfamily.</text>
</comment>
<name>PA2A_NOTSC</name>
<keyword id="KW-0106">Calcium</keyword>
<keyword id="KW-1015">Disulfide bond</keyword>
<keyword id="KW-0378">Hydrolase</keyword>
<keyword id="KW-0442">Lipid degradation</keyword>
<keyword id="KW-0443">Lipid metabolism</keyword>
<keyword id="KW-0479">Metal-binding</keyword>
<keyword id="KW-0964">Secreted</keyword>
<keyword id="KW-0732">Signal</keyword>
<proteinExistence type="evidence at transcript level"/>
<dbReference type="EC" id="3.1.1.4"/>
<dbReference type="EMBL" id="X14043">
    <property type="protein sequence ID" value="CAA32201.1"/>
    <property type="molecule type" value="mRNA"/>
</dbReference>
<dbReference type="PIR" id="S07983">
    <property type="entry name" value="S07983"/>
</dbReference>
<dbReference type="SMR" id="P20146"/>
<dbReference type="GO" id="GO:0005576">
    <property type="term" value="C:extracellular region"/>
    <property type="evidence" value="ECO:0007669"/>
    <property type="project" value="UniProtKB-SubCell"/>
</dbReference>
<dbReference type="GO" id="GO:0005509">
    <property type="term" value="F:calcium ion binding"/>
    <property type="evidence" value="ECO:0007669"/>
    <property type="project" value="InterPro"/>
</dbReference>
<dbReference type="GO" id="GO:0047498">
    <property type="term" value="F:calcium-dependent phospholipase A2 activity"/>
    <property type="evidence" value="ECO:0007669"/>
    <property type="project" value="TreeGrafter"/>
</dbReference>
<dbReference type="GO" id="GO:0005543">
    <property type="term" value="F:phospholipid binding"/>
    <property type="evidence" value="ECO:0007669"/>
    <property type="project" value="TreeGrafter"/>
</dbReference>
<dbReference type="GO" id="GO:0050482">
    <property type="term" value="P:arachidonate secretion"/>
    <property type="evidence" value="ECO:0007669"/>
    <property type="project" value="InterPro"/>
</dbReference>
<dbReference type="GO" id="GO:0016042">
    <property type="term" value="P:lipid catabolic process"/>
    <property type="evidence" value="ECO:0007669"/>
    <property type="project" value="UniProtKB-KW"/>
</dbReference>
<dbReference type="GO" id="GO:0006644">
    <property type="term" value="P:phospholipid metabolic process"/>
    <property type="evidence" value="ECO:0007669"/>
    <property type="project" value="InterPro"/>
</dbReference>
<dbReference type="CDD" id="cd00125">
    <property type="entry name" value="PLA2c"/>
    <property type="match status" value="1"/>
</dbReference>
<dbReference type="FunFam" id="1.20.90.10:FF:000007">
    <property type="entry name" value="Acidic phospholipase A2"/>
    <property type="match status" value="1"/>
</dbReference>
<dbReference type="Gene3D" id="1.20.90.10">
    <property type="entry name" value="Phospholipase A2 domain"/>
    <property type="match status" value="1"/>
</dbReference>
<dbReference type="InterPro" id="IPR001211">
    <property type="entry name" value="PLipase_A2"/>
</dbReference>
<dbReference type="InterPro" id="IPR033112">
    <property type="entry name" value="PLipase_A2_Asp_AS"/>
</dbReference>
<dbReference type="InterPro" id="IPR016090">
    <property type="entry name" value="PLipase_A2_dom"/>
</dbReference>
<dbReference type="InterPro" id="IPR036444">
    <property type="entry name" value="PLipase_A2_dom_sf"/>
</dbReference>
<dbReference type="InterPro" id="IPR033113">
    <property type="entry name" value="PLipase_A2_His_AS"/>
</dbReference>
<dbReference type="PANTHER" id="PTHR11716:SF51">
    <property type="entry name" value="PHOSPHOLIPASE A2"/>
    <property type="match status" value="1"/>
</dbReference>
<dbReference type="PANTHER" id="PTHR11716">
    <property type="entry name" value="PHOSPHOLIPASE A2 FAMILY MEMBER"/>
    <property type="match status" value="1"/>
</dbReference>
<dbReference type="Pfam" id="PF00068">
    <property type="entry name" value="Phospholip_A2_1"/>
    <property type="match status" value="1"/>
</dbReference>
<dbReference type="PRINTS" id="PR00389">
    <property type="entry name" value="PHPHLIPASEA2"/>
</dbReference>
<dbReference type="SMART" id="SM00085">
    <property type="entry name" value="PA2c"/>
    <property type="match status" value="1"/>
</dbReference>
<dbReference type="SUPFAM" id="SSF48619">
    <property type="entry name" value="Phospholipase A2, PLA2"/>
    <property type="match status" value="1"/>
</dbReference>
<dbReference type="PROSITE" id="PS00119">
    <property type="entry name" value="PA2_ASP"/>
    <property type="match status" value="1"/>
</dbReference>
<dbReference type="PROSITE" id="PS00118">
    <property type="entry name" value="PA2_HIS"/>
    <property type="match status" value="1"/>
</dbReference>
<reference key="1">
    <citation type="submission" date="1989-01" db="EMBL/GenBank/DDBJ databases">
        <authorList>
            <person name="Ducancel F."/>
        </authorList>
    </citation>
    <scope>NUCLEOTIDE SEQUENCE [MRNA]</scope>
    <source>
        <tissue>Venom gland</tissue>
    </source>
</reference>